<gene>
    <name type="primary">CDC11</name>
    <name type="ordered locus">ECU09_0820</name>
</gene>
<proteinExistence type="evidence at protein level"/>
<feature type="chain" id="PRO_0000381761" description="Cell division control protein 11">
    <location>
        <begin position="1"/>
        <end position="267"/>
    </location>
</feature>
<feature type="domain" description="Septin-type G" evidence="2">
    <location>
        <begin position="6"/>
        <end position="263"/>
    </location>
</feature>
<feature type="region of interest" description="G1 motif" evidence="2">
    <location>
        <begin position="16"/>
        <end position="23"/>
    </location>
</feature>
<feature type="region of interest" description="G3 motif" evidence="2">
    <location>
        <begin position="63"/>
        <end position="66"/>
    </location>
</feature>
<feature type="region of interest" description="G4 motif" evidence="2">
    <location>
        <begin position="145"/>
        <end position="148"/>
    </location>
</feature>
<feature type="binding site" evidence="1">
    <location>
        <begin position="16"/>
        <end position="23"/>
    </location>
    <ligand>
        <name>GTP</name>
        <dbReference type="ChEBI" id="CHEBI:37565"/>
    </ligand>
</feature>
<feature type="binding site" evidence="1">
    <location>
        <position position="66"/>
    </location>
    <ligand>
        <name>GTP</name>
        <dbReference type="ChEBI" id="CHEBI:37565"/>
    </ligand>
</feature>
<feature type="binding site" evidence="1">
    <location>
        <begin position="146"/>
        <end position="154"/>
    </location>
    <ligand>
        <name>GTP</name>
        <dbReference type="ChEBI" id="CHEBI:37565"/>
    </ligand>
</feature>
<feature type="binding site" evidence="1">
    <location>
        <position position="212"/>
    </location>
    <ligand>
        <name>GTP</name>
        <dbReference type="ChEBI" id="CHEBI:37565"/>
    </ligand>
</feature>
<reference key="1">
    <citation type="journal article" date="2001" name="Nature">
        <title>Genome sequence and gene compaction of the eukaryote parasite Encephalitozoon cuniculi.</title>
        <authorList>
            <person name="Katinka M.D."/>
            <person name="Duprat S."/>
            <person name="Cornillot E."/>
            <person name="Metenier G."/>
            <person name="Thomarat F."/>
            <person name="Prensier G."/>
            <person name="Barbe V."/>
            <person name="Peyretaillade E."/>
            <person name="Brottier P."/>
            <person name="Wincker P."/>
            <person name="Delbac F."/>
            <person name="El Alaoui H."/>
            <person name="Peyret P."/>
            <person name="Saurin W."/>
            <person name="Gouy M."/>
            <person name="Weissenbach J."/>
            <person name="Vivares C.P."/>
        </authorList>
    </citation>
    <scope>NUCLEOTIDE SEQUENCE [LARGE SCALE GENOMIC DNA]</scope>
    <source>
        <strain>GB-M1</strain>
    </source>
</reference>
<reference key="2">
    <citation type="journal article" date="2009" name="BMC Genomics">
        <title>Identification of transcriptional signals in Encephalitozoon cuniculi widespread among Microsporidia phylum: support for accurate structural genome annotation.</title>
        <authorList>
            <person name="Peyretaillade E."/>
            <person name="Goncalves O."/>
            <person name="Terrat S."/>
            <person name="Dugat-Bony E."/>
            <person name="Wincker P."/>
            <person name="Cornman R.S."/>
            <person name="Evans J.D."/>
            <person name="Delbac F."/>
            <person name="Peyret P."/>
        </authorList>
    </citation>
    <scope>GENOME REANNOTATION</scope>
    <source>
        <strain>GB-M1</strain>
    </source>
</reference>
<reference key="3">
    <citation type="journal article" date="2006" name="Proteomics">
        <title>Proteomic analysis of the eukaryotic parasite Encephalitozoon cuniculi (microsporidia): a reference map for proteins expressed in late sporogonial stages.</title>
        <authorList>
            <person name="Brosson D."/>
            <person name="Kuhn L."/>
            <person name="Delbac F."/>
            <person name="Garin J."/>
            <person name="Vivares C.P."/>
            <person name="Texier C."/>
        </authorList>
    </citation>
    <scope>IDENTIFICATION BY MASS SPECTROMETRY [LARGE SCALE ANALYSIS]</scope>
    <scope>DEVELOPMENTAL STAGE</scope>
</reference>
<dbReference type="EMBL" id="AL590451">
    <property type="protein sequence ID" value="CAD27055.2"/>
    <property type="molecule type" value="Genomic_DNA"/>
</dbReference>
<dbReference type="RefSeq" id="XP_955636.1">
    <property type="nucleotide sequence ID" value="XM_950543.1"/>
</dbReference>
<dbReference type="SMR" id="Q8STS8"/>
<dbReference type="FunCoup" id="Q8STS8">
    <property type="interactions" value="24"/>
</dbReference>
<dbReference type="STRING" id="284813.Q8STS8"/>
<dbReference type="VEuPathDB" id="MicrosporidiaDB:ECU09_0820"/>
<dbReference type="HOGENOM" id="CLU_017718_7_0_1"/>
<dbReference type="InParanoid" id="Q8STS8"/>
<dbReference type="OrthoDB" id="416553at2759"/>
<dbReference type="Proteomes" id="UP000000819">
    <property type="component" value="Chromosome IX"/>
</dbReference>
<dbReference type="GO" id="GO:0005938">
    <property type="term" value="C:cell cortex"/>
    <property type="evidence" value="ECO:0007669"/>
    <property type="project" value="UniProtKB-ARBA"/>
</dbReference>
<dbReference type="GO" id="GO:0032156">
    <property type="term" value="C:septin cytoskeleton"/>
    <property type="evidence" value="ECO:0007669"/>
    <property type="project" value="UniProtKB-ARBA"/>
</dbReference>
<dbReference type="GO" id="GO:0005525">
    <property type="term" value="F:GTP binding"/>
    <property type="evidence" value="ECO:0007669"/>
    <property type="project" value="UniProtKB-KW"/>
</dbReference>
<dbReference type="GO" id="GO:0051301">
    <property type="term" value="P:cell division"/>
    <property type="evidence" value="ECO:0007669"/>
    <property type="project" value="UniProtKB-KW"/>
</dbReference>
<dbReference type="CDD" id="cd01850">
    <property type="entry name" value="CDC_Septin"/>
    <property type="match status" value="1"/>
</dbReference>
<dbReference type="Gene3D" id="3.40.50.300">
    <property type="entry name" value="P-loop containing nucleotide triphosphate hydrolases"/>
    <property type="match status" value="1"/>
</dbReference>
<dbReference type="InterPro" id="IPR030379">
    <property type="entry name" value="G_SEPTIN_dom"/>
</dbReference>
<dbReference type="InterPro" id="IPR027417">
    <property type="entry name" value="P-loop_NTPase"/>
</dbReference>
<dbReference type="InterPro" id="IPR016491">
    <property type="entry name" value="Septin"/>
</dbReference>
<dbReference type="PANTHER" id="PTHR18884">
    <property type="entry name" value="SEPTIN"/>
    <property type="match status" value="1"/>
</dbReference>
<dbReference type="Pfam" id="PF00735">
    <property type="entry name" value="Septin"/>
    <property type="match status" value="1"/>
</dbReference>
<dbReference type="PIRSF" id="PIRSF006698">
    <property type="entry name" value="Septin"/>
    <property type="match status" value="1"/>
</dbReference>
<dbReference type="SUPFAM" id="SSF52540">
    <property type="entry name" value="P-loop containing nucleoside triphosphate hydrolases"/>
    <property type="match status" value="1"/>
</dbReference>
<dbReference type="PROSITE" id="PS51719">
    <property type="entry name" value="G_SEPTIN"/>
    <property type="match status" value="1"/>
</dbReference>
<name>CDC11_ENCCU</name>
<accession>Q8STS8</accession>
<sequence>MIVRRQNRRFTIMAAGPRGSGKSSFFNSLIGKEIVTSRGHEGIDLYMLNLDCEGIMQRITLIDTPGFGEGFDDSEIQETICNFIKAQLDMFIAEESKIRRNPKYEDTRVHCLLYFIPSTSSSLKSRDIAFLRKVSGLVNIIPVISKSDGLSITERIEVKRQVMEQIKHYNISIFDLDDPEVYSSPAAGNDLNSLVPFLVVSADRENFESRARNYQWGDVSIDNPDHCDLPALRELLLSTHIYGLIDYTASEIYENYRAAVLEGGVRK</sequence>
<evidence type="ECO:0000250" key="1"/>
<evidence type="ECO:0000255" key="2">
    <source>
        <dbReference type="PROSITE-ProRule" id="PRU01056"/>
    </source>
</evidence>
<evidence type="ECO:0000269" key="3">
    <source>
    </source>
</evidence>
<comment type="function">
    <text evidence="1">Septins are GTPases involved in cytokinesis. The septins localize to the site of cleavage and act as a structural scaffold that recruits different components involved in diverse processes at specific stages during the cell cycle. Septins are also involved in cell morphogenesis, chitin deposition, cell cycle regulation, cell compartmentalization and spore wall formation (By similarity).</text>
</comment>
<comment type="subunit">
    <text evidence="1">Component of the septin complex.</text>
</comment>
<comment type="developmental stage">
    <text evidence="3">Expressed in late sporogonial stages.</text>
</comment>
<comment type="similarity">
    <text evidence="2">Belongs to the TRAFAC class TrmE-Era-EngA-EngB-Septin-like GTPase superfamily. Septin GTPase family.</text>
</comment>
<keyword id="KW-0131">Cell cycle</keyword>
<keyword id="KW-0132">Cell division</keyword>
<keyword id="KW-0342">GTP-binding</keyword>
<keyword id="KW-0547">Nucleotide-binding</keyword>
<keyword id="KW-1185">Reference proteome</keyword>
<organism>
    <name type="scientific">Encephalitozoon cuniculi (strain GB-M1)</name>
    <name type="common">Microsporidian parasite</name>
    <dbReference type="NCBI Taxonomy" id="284813"/>
    <lineage>
        <taxon>Eukaryota</taxon>
        <taxon>Fungi</taxon>
        <taxon>Fungi incertae sedis</taxon>
        <taxon>Microsporidia</taxon>
        <taxon>Unikaryonidae</taxon>
        <taxon>Encephalitozoon</taxon>
    </lineage>
</organism>
<protein>
    <recommendedName>
        <fullName>Cell division control protein 11</fullName>
    </recommendedName>
</protein>